<comment type="function">
    <text evidence="1">Could be a nuclease involved in processing of the 5'-end of pre-16S rRNA.</text>
</comment>
<comment type="subcellular location">
    <subcellularLocation>
        <location evidence="1">Cytoplasm</location>
    </subcellularLocation>
</comment>
<comment type="similarity">
    <text evidence="1">Belongs to the YqgF nuclease family.</text>
</comment>
<protein>
    <recommendedName>
        <fullName evidence="1">Putative pre-16S rRNA nuclease</fullName>
        <ecNumber evidence="1">3.1.-.-</ecNumber>
    </recommendedName>
</protein>
<feature type="chain" id="PRO_1000131069" description="Putative pre-16S rRNA nuclease">
    <location>
        <begin position="1"/>
        <end position="138"/>
    </location>
</feature>
<proteinExistence type="inferred from homology"/>
<keyword id="KW-0963">Cytoplasm</keyword>
<keyword id="KW-0378">Hydrolase</keyword>
<keyword id="KW-0540">Nuclease</keyword>
<keyword id="KW-0690">Ribosome biogenesis</keyword>
<accession>B5RE57</accession>
<organism>
    <name type="scientific">Salmonella gallinarum (strain 287/91 / NCTC 13346)</name>
    <dbReference type="NCBI Taxonomy" id="550538"/>
    <lineage>
        <taxon>Bacteria</taxon>
        <taxon>Pseudomonadati</taxon>
        <taxon>Pseudomonadota</taxon>
        <taxon>Gammaproteobacteria</taxon>
        <taxon>Enterobacterales</taxon>
        <taxon>Enterobacteriaceae</taxon>
        <taxon>Salmonella</taxon>
    </lineage>
</organism>
<evidence type="ECO:0000255" key="1">
    <source>
        <dbReference type="HAMAP-Rule" id="MF_00651"/>
    </source>
</evidence>
<sequence length="138" mass="15248">MSDTLLAFDFGTKSIGVAIGQRITGTARPLPAIKAQDGTPDWMLIERLLKEWQPDEIIVGLPLNMDGTEQPLTARARKFANRIHGRFGVTVTLHDERLSTVEARSGLFERGGYRALNKGKVDSASAVIILESYFEQGY</sequence>
<name>YQGF_SALG2</name>
<gene>
    <name evidence="1" type="primary">yqgF</name>
    <name type="ordered locus">SG2991</name>
</gene>
<dbReference type="EC" id="3.1.-.-" evidence="1"/>
<dbReference type="EMBL" id="AM933173">
    <property type="protein sequence ID" value="CAR38796.1"/>
    <property type="molecule type" value="Genomic_DNA"/>
</dbReference>
<dbReference type="SMR" id="B5RE57"/>
<dbReference type="KEGG" id="seg:SG2991"/>
<dbReference type="HOGENOM" id="CLU_098240_3_0_6"/>
<dbReference type="Proteomes" id="UP000008321">
    <property type="component" value="Chromosome"/>
</dbReference>
<dbReference type="GO" id="GO:0005829">
    <property type="term" value="C:cytosol"/>
    <property type="evidence" value="ECO:0007669"/>
    <property type="project" value="TreeGrafter"/>
</dbReference>
<dbReference type="GO" id="GO:0004518">
    <property type="term" value="F:nuclease activity"/>
    <property type="evidence" value="ECO:0007669"/>
    <property type="project" value="UniProtKB-KW"/>
</dbReference>
<dbReference type="GO" id="GO:0000967">
    <property type="term" value="P:rRNA 5'-end processing"/>
    <property type="evidence" value="ECO:0007669"/>
    <property type="project" value="UniProtKB-UniRule"/>
</dbReference>
<dbReference type="CDD" id="cd16964">
    <property type="entry name" value="YqgF"/>
    <property type="match status" value="1"/>
</dbReference>
<dbReference type="FunFam" id="3.30.420.140:FF:000002">
    <property type="entry name" value="Putative pre-16S rRNA nuclease"/>
    <property type="match status" value="1"/>
</dbReference>
<dbReference type="Gene3D" id="3.30.420.140">
    <property type="entry name" value="YqgF/RNase H-like domain"/>
    <property type="match status" value="1"/>
</dbReference>
<dbReference type="HAMAP" id="MF_00651">
    <property type="entry name" value="Nuclease_YqgF"/>
    <property type="match status" value="1"/>
</dbReference>
<dbReference type="InterPro" id="IPR012337">
    <property type="entry name" value="RNaseH-like_sf"/>
</dbReference>
<dbReference type="InterPro" id="IPR005227">
    <property type="entry name" value="YqgF"/>
</dbReference>
<dbReference type="InterPro" id="IPR006641">
    <property type="entry name" value="YqgF/RNaseH-like_dom"/>
</dbReference>
<dbReference type="InterPro" id="IPR037027">
    <property type="entry name" value="YqgF/RNaseH-like_dom_sf"/>
</dbReference>
<dbReference type="NCBIfam" id="TIGR00250">
    <property type="entry name" value="RNAse_H_YqgF"/>
    <property type="match status" value="1"/>
</dbReference>
<dbReference type="PANTHER" id="PTHR33317">
    <property type="entry name" value="POLYNUCLEOTIDYL TRANSFERASE, RIBONUCLEASE H-LIKE SUPERFAMILY PROTEIN"/>
    <property type="match status" value="1"/>
</dbReference>
<dbReference type="PANTHER" id="PTHR33317:SF4">
    <property type="entry name" value="POLYNUCLEOTIDYL TRANSFERASE, RIBONUCLEASE H-LIKE SUPERFAMILY PROTEIN"/>
    <property type="match status" value="1"/>
</dbReference>
<dbReference type="Pfam" id="PF03652">
    <property type="entry name" value="RuvX"/>
    <property type="match status" value="1"/>
</dbReference>
<dbReference type="SMART" id="SM00732">
    <property type="entry name" value="YqgFc"/>
    <property type="match status" value="1"/>
</dbReference>
<dbReference type="SUPFAM" id="SSF53098">
    <property type="entry name" value="Ribonuclease H-like"/>
    <property type="match status" value="1"/>
</dbReference>
<reference key="1">
    <citation type="journal article" date="2008" name="Genome Res.">
        <title>Comparative genome analysis of Salmonella enteritidis PT4 and Salmonella gallinarum 287/91 provides insights into evolutionary and host adaptation pathways.</title>
        <authorList>
            <person name="Thomson N.R."/>
            <person name="Clayton D.J."/>
            <person name="Windhorst D."/>
            <person name="Vernikos G."/>
            <person name="Davidson S."/>
            <person name="Churcher C."/>
            <person name="Quail M.A."/>
            <person name="Stevens M."/>
            <person name="Jones M.A."/>
            <person name="Watson M."/>
            <person name="Barron A."/>
            <person name="Layton A."/>
            <person name="Pickard D."/>
            <person name="Kingsley R.A."/>
            <person name="Bignell A."/>
            <person name="Clark L."/>
            <person name="Harris B."/>
            <person name="Ormond D."/>
            <person name="Abdellah Z."/>
            <person name="Brooks K."/>
            <person name="Cherevach I."/>
            <person name="Chillingworth T."/>
            <person name="Woodward J."/>
            <person name="Norberczak H."/>
            <person name="Lord A."/>
            <person name="Arrowsmith C."/>
            <person name="Jagels K."/>
            <person name="Moule S."/>
            <person name="Mungall K."/>
            <person name="Saunders M."/>
            <person name="Whitehead S."/>
            <person name="Chabalgoity J.A."/>
            <person name="Maskell D."/>
            <person name="Humphreys T."/>
            <person name="Roberts M."/>
            <person name="Barrow P.A."/>
            <person name="Dougan G."/>
            <person name="Parkhill J."/>
        </authorList>
    </citation>
    <scope>NUCLEOTIDE SEQUENCE [LARGE SCALE GENOMIC DNA]</scope>
    <source>
        <strain>287/91 / NCTC 13346</strain>
    </source>
</reference>